<keyword id="KW-0539">Nucleus</keyword>
<keyword id="KW-1185">Reference proteome</keyword>
<name>TEAN2_DANRE</name>
<proteinExistence type="inferred from homology"/>
<organism>
    <name type="scientific">Danio rerio</name>
    <name type="common">Zebrafish</name>
    <name type="synonym">Brachydanio rerio</name>
    <dbReference type="NCBI Taxonomy" id="7955"/>
    <lineage>
        <taxon>Eukaryota</taxon>
        <taxon>Metazoa</taxon>
        <taxon>Chordata</taxon>
        <taxon>Craniata</taxon>
        <taxon>Vertebrata</taxon>
        <taxon>Euteleostomi</taxon>
        <taxon>Actinopterygii</taxon>
        <taxon>Neopterygii</taxon>
        <taxon>Teleostei</taxon>
        <taxon>Ostariophysi</taxon>
        <taxon>Cypriniformes</taxon>
        <taxon>Danionidae</taxon>
        <taxon>Danioninae</taxon>
        <taxon>Danio</taxon>
    </lineage>
</organism>
<accession>B0UYI1</accession>
<evidence type="ECO:0000255" key="1">
    <source>
        <dbReference type="PROSITE-ProRule" id="PRU00649"/>
    </source>
</evidence>
<evidence type="ECO:0000255" key="2">
    <source>
        <dbReference type="PROSITE-ProRule" id="PRU00651"/>
    </source>
</evidence>
<evidence type="ECO:0000305" key="3"/>
<feature type="chain" id="PRO_0000406044" description="Transcription elongation factor A N-terminal and central domain-containing protein 2">
    <location>
        <begin position="1"/>
        <end position="210"/>
    </location>
</feature>
<feature type="domain" description="TFIIS N-terminal" evidence="1">
    <location>
        <begin position="39"/>
        <end position="114"/>
    </location>
</feature>
<feature type="domain" description="TFIIS central" evidence="2">
    <location>
        <begin position="131"/>
        <end position="210"/>
    </location>
</feature>
<sequence>MDKFVVRLPKDDMMKQESKHERNYKQATLESLRRVVVIEDIERYKSILELPGQPKENMIEALKELDKKVPSREVLKSTRIGHTVNNLRKHSDDPEIKSLAKEVYKHWRTFIEEHANKPSIEVRCDKQTESLRSNAKKLLSEAIEMKVDHELVENIEREVFHQSSRLVSGAYRRTVRALVFALKHKPELRVQVKDGKLPVNVFVKSYKKKS</sequence>
<reference key="1">
    <citation type="journal article" date="2013" name="Nature">
        <title>The zebrafish reference genome sequence and its relationship to the human genome.</title>
        <authorList>
            <person name="Howe K."/>
            <person name="Clark M.D."/>
            <person name="Torroja C.F."/>
            <person name="Torrance J."/>
            <person name="Berthelot C."/>
            <person name="Muffato M."/>
            <person name="Collins J.E."/>
            <person name="Humphray S."/>
            <person name="McLaren K."/>
            <person name="Matthews L."/>
            <person name="McLaren S."/>
            <person name="Sealy I."/>
            <person name="Caccamo M."/>
            <person name="Churcher C."/>
            <person name="Scott C."/>
            <person name="Barrett J.C."/>
            <person name="Koch R."/>
            <person name="Rauch G.J."/>
            <person name="White S."/>
            <person name="Chow W."/>
            <person name="Kilian B."/>
            <person name="Quintais L.T."/>
            <person name="Guerra-Assuncao J.A."/>
            <person name="Zhou Y."/>
            <person name="Gu Y."/>
            <person name="Yen J."/>
            <person name="Vogel J.H."/>
            <person name="Eyre T."/>
            <person name="Redmond S."/>
            <person name="Banerjee R."/>
            <person name="Chi J."/>
            <person name="Fu B."/>
            <person name="Langley E."/>
            <person name="Maguire S.F."/>
            <person name="Laird G.K."/>
            <person name="Lloyd D."/>
            <person name="Kenyon E."/>
            <person name="Donaldson S."/>
            <person name="Sehra H."/>
            <person name="Almeida-King J."/>
            <person name="Loveland J."/>
            <person name="Trevanion S."/>
            <person name="Jones M."/>
            <person name="Quail M."/>
            <person name="Willey D."/>
            <person name="Hunt A."/>
            <person name="Burton J."/>
            <person name="Sims S."/>
            <person name="McLay K."/>
            <person name="Plumb B."/>
            <person name="Davis J."/>
            <person name="Clee C."/>
            <person name="Oliver K."/>
            <person name="Clark R."/>
            <person name="Riddle C."/>
            <person name="Elliot D."/>
            <person name="Threadgold G."/>
            <person name="Harden G."/>
            <person name="Ware D."/>
            <person name="Begum S."/>
            <person name="Mortimore B."/>
            <person name="Kerry G."/>
            <person name="Heath P."/>
            <person name="Phillimore B."/>
            <person name="Tracey A."/>
            <person name="Corby N."/>
            <person name="Dunn M."/>
            <person name="Johnson C."/>
            <person name="Wood J."/>
            <person name="Clark S."/>
            <person name="Pelan S."/>
            <person name="Griffiths G."/>
            <person name="Smith M."/>
            <person name="Glithero R."/>
            <person name="Howden P."/>
            <person name="Barker N."/>
            <person name="Lloyd C."/>
            <person name="Stevens C."/>
            <person name="Harley J."/>
            <person name="Holt K."/>
            <person name="Panagiotidis G."/>
            <person name="Lovell J."/>
            <person name="Beasley H."/>
            <person name="Henderson C."/>
            <person name="Gordon D."/>
            <person name="Auger K."/>
            <person name="Wright D."/>
            <person name="Collins J."/>
            <person name="Raisen C."/>
            <person name="Dyer L."/>
            <person name="Leung K."/>
            <person name="Robertson L."/>
            <person name="Ambridge K."/>
            <person name="Leongamornlert D."/>
            <person name="McGuire S."/>
            <person name="Gilderthorp R."/>
            <person name="Griffiths C."/>
            <person name="Manthravadi D."/>
            <person name="Nichol S."/>
            <person name="Barker G."/>
            <person name="Whitehead S."/>
            <person name="Kay M."/>
            <person name="Brown J."/>
            <person name="Murnane C."/>
            <person name="Gray E."/>
            <person name="Humphries M."/>
            <person name="Sycamore N."/>
            <person name="Barker D."/>
            <person name="Saunders D."/>
            <person name="Wallis J."/>
            <person name="Babbage A."/>
            <person name="Hammond S."/>
            <person name="Mashreghi-Mohammadi M."/>
            <person name="Barr L."/>
            <person name="Martin S."/>
            <person name="Wray P."/>
            <person name="Ellington A."/>
            <person name="Matthews N."/>
            <person name="Ellwood M."/>
            <person name="Woodmansey R."/>
            <person name="Clark G."/>
            <person name="Cooper J."/>
            <person name="Tromans A."/>
            <person name="Grafham D."/>
            <person name="Skuce C."/>
            <person name="Pandian R."/>
            <person name="Andrews R."/>
            <person name="Harrison E."/>
            <person name="Kimberley A."/>
            <person name="Garnett J."/>
            <person name="Fosker N."/>
            <person name="Hall R."/>
            <person name="Garner P."/>
            <person name="Kelly D."/>
            <person name="Bird C."/>
            <person name="Palmer S."/>
            <person name="Gehring I."/>
            <person name="Berger A."/>
            <person name="Dooley C.M."/>
            <person name="Ersan-Urun Z."/>
            <person name="Eser C."/>
            <person name="Geiger H."/>
            <person name="Geisler M."/>
            <person name="Karotki L."/>
            <person name="Kirn A."/>
            <person name="Konantz J."/>
            <person name="Konantz M."/>
            <person name="Oberlander M."/>
            <person name="Rudolph-Geiger S."/>
            <person name="Teucke M."/>
            <person name="Lanz C."/>
            <person name="Raddatz G."/>
            <person name="Osoegawa K."/>
            <person name="Zhu B."/>
            <person name="Rapp A."/>
            <person name="Widaa S."/>
            <person name="Langford C."/>
            <person name="Yang F."/>
            <person name="Schuster S.C."/>
            <person name="Carter N.P."/>
            <person name="Harrow J."/>
            <person name="Ning Z."/>
            <person name="Herrero J."/>
            <person name="Searle S.M."/>
            <person name="Enright A."/>
            <person name="Geisler R."/>
            <person name="Plasterk R.H."/>
            <person name="Lee C."/>
            <person name="Westerfield M."/>
            <person name="de Jong P.J."/>
            <person name="Zon L.I."/>
            <person name="Postlethwait J.H."/>
            <person name="Nusslein-Volhard C."/>
            <person name="Hubbard T.J."/>
            <person name="Roest Crollius H."/>
            <person name="Rogers J."/>
            <person name="Stemple D.L."/>
        </authorList>
    </citation>
    <scope>NUCLEOTIDE SEQUENCE [LARGE SCALE GENOMIC DNA]</scope>
    <source>
        <strain>Tuebingen</strain>
    </source>
</reference>
<dbReference type="EMBL" id="CR450845">
    <property type="protein sequence ID" value="CAQ13685.1"/>
    <property type="molecule type" value="Genomic_DNA"/>
</dbReference>
<dbReference type="RefSeq" id="NP_001333180.1">
    <property type="nucleotide sequence ID" value="NM_001346251.1"/>
</dbReference>
<dbReference type="SMR" id="B0UYI1"/>
<dbReference type="FunCoup" id="B0UYI1">
    <property type="interactions" value="1350"/>
</dbReference>
<dbReference type="STRING" id="7955.ENSDARP00000085930"/>
<dbReference type="PaxDb" id="7955-ENSDARP00000085930"/>
<dbReference type="Ensembl" id="ENSDART00000091497">
    <property type="protein sequence ID" value="ENSDARP00000085930"/>
    <property type="gene ID" value="ENSDARG00000062919"/>
</dbReference>
<dbReference type="GeneID" id="567698"/>
<dbReference type="KEGG" id="dre:567698"/>
<dbReference type="AGR" id="ZFIN:ZDB-GENE-070705-486"/>
<dbReference type="CTD" id="127428"/>
<dbReference type="ZFIN" id="ZDB-GENE-070705-486">
    <property type="gene designation" value="tceanc2"/>
</dbReference>
<dbReference type="eggNOG" id="KOG1105">
    <property type="taxonomic scope" value="Eukaryota"/>
</dbReference>
<dbReference type="HOGENOM" id="CLU_086873_0_0_1"/>
<dbReference type="InParanoid" id="B0UYI1"/>
<dbReference type="OMA" id="QPKENLM"/>
<dbReference type="OrthoDB" id="44867at2759"/>
<dbReference type="PhylomeDB" id="B0UYI1"/>
<dbReference type="TreeFam" id="TF331911"/>
<dbReference type="PRO" id="PR:B0UYI1"/>
<dbReference type="Proteomes" id="UP000000437">
    <property type="component" value="Chromosome 2"/>
</dbReference>
<dbReference type="Bgee" id="ENSDARG00000062919">
    <property type="expression patterns" value="Expressed in early embryo and 22 other cell types or tissues"/>
</dbReference>
<dbReference type="GO" id="GO:0005634">
    <property type="term" value="C:nucleus"/>
    <property type="evidence" value="ECO:0000318"/>
    <property type="project" value="GO_Central"/>
</dbReference>
<dbReference type="GO" id="GO:0006351">
    <property type="term" value="P:DNA-templated transcription"/>
    <property type="evidence" value="ECO:0007669"/>
    <property type="project" value="InterPro"/>
</dbReference>
<dbReference type="GO" id="GO:0006357">
    <property type="term" value="P:regulation of transcription by RNA polymerase II"/>
    <property type="evidence" value="ECO:0000318"/>
    <property type="project" value="GO_Central"/>
</dbReference>
<dbReference type="CDD" id="cd00183">
    <property type="entry name" value="TFIIS_I"/>
    <property type="match status" value="1"/>
</dbReference>
<dbReference type="Gene3D" id="1.20.930.10">
    <property type="entry name" value="Conserved domain common to transcription factors TFIIS, elongin A, CRSP70"/>
    <property type="match status" value="1"/>
</dbReference>
<dbReference type="Gene3D" id="1.10.472.30">
    <property type="entry name" value="Transcription elongation factor S-II, central domain"/>
    <property type="match status" value="1"/>
</dbReference>
<dbReference type="InterPro" id="IPR003617">
    <property type="entry name" value="TFIIS/CRSP70_N_sub"/>
</dbReference>
<dbReference type="InterPro" id="IPR035441">
    <property type="entry name" value="TFIIS/LEDGF_dom_sf"/>
</dbReference>
<dbReference type="InterPro" id="IPR003618">
    <property type="entry name" value="TFIIS_cen_dom"/>
</dbReference>
<dbReference type="InterPro" id="IPR036575">
    <property type="entry name" value="TFIIS_cen_dom_sf"/>
</dbReference>
<dbReference type="InterPro" id="IPR017923">
    <property type="entry name" value="TFIIS_N"/>
</dbReference>
<dbReference type="PANTHER" id="PTHR46554">
    <property type="entry name" value="MEDIATOR OF RNA POLYMERASE II TRANSCRIPTION SUBUNIT 26A-RELATED"/>
    <property type="match status" value="1"/>
</dbReference>
<dbReference type="PANTHER" id="PTHR46554:SF2">
    <property type="entry name" value="TFIIS N-TERMINAL DOMAIN-CONTAINING PROTEIN"/>
    <property type="match status" value="1"/>
</dbReference>
<dbReference type="Pfam" id="PF08711">
    <property type="entry name" value="Med26"/>
    <property type="match status" value="1"/>
</dbReference>
<dbReference type="Pfam" id="PF07500">
    <property type="entry name" value="TFIIS_M"/>
    <property type="match status" value="1"/>
</dbReference>
<dbReference type="SMART" id="SM00509">
    <property type="entry name" value="TFS2N"/>
    <property type="match status" value="1"/>
</dbReference>
<dbReference type="SUPFAM" id="SSF47676">
    <property type="entry name" value="Conserved domain common to transcription factors TFIIS, elongin A, CRSP70"/>
    <property type="match status" value="1"/>
</dbReference>
<dbReference type="SUPFAM" id="SSF46942">
    <property type="entry name" value="Elongation factor TFIIS domain 2"/>
    <property type="match status" value="1"/>
</dbReference>
<dbReference type="PROSITE" id="PS51321">
    <property type="entry name" value="TFIIS_CENTRAL"/>
    <property type="match status" value="1"/>
</dbReference>
<dbReference type="PROSITE" id="PS51319">
    <property type="entry name" value="TFIIS_N"/>
    <property type="match status" value="1"/>
</dbReference>
<protein>
    <recommendedName>
        <fullName>Transcription elongation factor A N-terminal and central domain-containing protein 2</fullName>
    </recommendedName>
</protein>
<gene>
    <name type="primary">tceanc2</name>
    <name type="ORF">si:dkey-63k7.9</name>
</gene>
<comment type="subcellular location">
    <subcellularLocation>
        <location evidence="1 2">Nucleus</location>
    </subcellularLocation>
</comment>
<comment type="similarity">
    <text evidence="3">Belongs to the TCEANC2 family.</text>
</comment>